<organism>
    <name type="scientific">Bradyrhizobium diazoefficiens (strain JCM 10833 / BCRC 13528 / IAM 13628 / NBRC 14792 / USDA 110)</name>
    <dbReference type="NCBI Taxonomy" id="224911"/>
    <lineage>
        <taxon>Bacteria</taxon>
        <taxon>Pseudomonadati</taxon>
        <taxon>Pseudomonadota</taxon>
        <taxon>Alphaproteobacteria</taxon>
        <taxon>Hyphomicrobiales</taxon>
        <taxon>Nitrobacteraceae</taxon>
        <taxon>Bradyrhizobium</taxon>
    </lineage>
</organism>
<gene>
    <name evidence="1" type="primary">cysA</name>
    <name type="ordered locus">blr1485</name>
</gene>
<feature type="chain" id="PRO_0000092256" description="Sulfate/thiosulfate import ATP-binding protein CysA">
    <location>
        <begin position="1"/>
        <end position="344"/>
    </location>
</feature>
<feature type="domain" description="ABC transporter" evidence="1">
    <location>
        <begin position="3"/>
        <end position="237"/>
    </location>
</feature>
<feature type="binding site" evidence="1">
    <location>
        <begin position="35"/>
        <end position="42"/>
    </location>
    <ligand>
        <name>ATP</name>
        <dbReference type="ChEBI" id="CHEBI:30616"/>
    </ligand>
</feature>
<reference key="1">
    <citation type="journal article" date="2002" name="DNA Res.">
        <title>Complete genomic sequence of nitrogen-fixing symbiotic bacterium Bradyrhizobium japonicum USDA110.</title>
        <authorList>
            <person name="Kaneko T."/>
            <person name="Nakamura Y."/>
            <person name="Sato S."/>
            <person name="Minamisawa K."/>
            <person name="Uchiumi T."/>
            <person name="Sasamoto S."/>
            <person name="Watanabe A."/>
            <person name="Idesawa K."/>
            <person name="Iriguchi M."/>
            <person name="Kawashima K."/>
            <person name="Kohara M."/>
            <person name="Matsumoto M."/>
            <person name="Shimpo S."/>
            <person name="Tsuruoka H."/>
            <person name="Wada T."/>
            <person name="Yamada M."/>
            <person name="Tabata S."/>
        </authorList>
    </citation>
    <scope>NUCLEOTIDE SEQUENCE [LARGE SCALE GENOMIC DNA]</scope>
    <source>
        <strain>JCM 10833 / BCRC 13528 / IAM 13628 / NBRC 14792 / USDA 110</strain>
    </source>
</reference>
<accession>Q89UD2</accession>
<sequence length="344" mass="38223">MTIEVRNLVKKFGSFAALDGVNLKVDNGELLALLGPSGSGKTTLLRIIAGLDWPDSGEVSFNGEDALAQGARERHVGFVFQHYALFRHMTVFENVAFGLRVQPRAVRKEEARIRARVKELLDLVQLDWLADRYPSQLSGGQRQRIALARALAIEPRILLLDEPFGALDAKVRKELRKWLRSLHHEINVTSIFVTHDQEEALEVANRVVVMDKGRIEQIGSPEDVYESPATAFVHGFIGESIELPVRIDDGVVRLGERPLRLAADGLAPGASRLFVRRHDMLVGPPGTGAFEGAVRHVRNFGPVQRAEVALFGGETIEIDAPRDRELRAGDRVGLEPRRYRIFAG</sequence>
<comment type="function">
    <text evidence="1">Part of the ABC transporter complex CysAWTP involved in sulfate/thiosulfate import. Responsible for energy coupling to the transport system.</text>
</comment>
<comment type="catalytic activity">
    <reaction evidence="1">
        <text>sulfate(out) + ATP + H2O = sulfate(in) + ADP + phosphate + H(+)</text>
        <dbReference type="Rhea" id="RHEA:10192"/>
        <dbReference type="ChEBI" id="CHEBI:15377"/>
        <dbReference type="ChEBI" id="CHEBI:15378"/>
        <dbReference type="ChEBI" id="CHEBI:16189"/>
        <dbReference type="ChEBI" id="CHEBI:30616"/>
        <dbReference type="ChEBI" id="CHEBI:43474"/>
        <dbReference type="ChEBI" id="CHEBI:456216"/>
        <dbReference type="EC" id="7.3.2.3"/>
    </reaction>
</comment>
<comment type="catalytic activity">
    <reaction evidence="1">
        <text>thiosulfate(out) + ATP + H2O = thiosulfate(in) + ADP + phosphate + H(+)</text>
        <dbReference type="Rhea" id="RHEA:29871"/>
        <dbReference type="ChEBI" id="CHEBI:15377"/>
        <dbReference type="ChEBI" id="CHEBI:15378"/>
        <dbReference type="ChEBI" id="CHEBI:30616"/>
        <dbReference type="ChEBI" id="CHEBI:33542"/>
        <dbReference type="ChEBI" id="CHEBI:43474"/>
        <dbReference type="ChEBI" id="CHEBI:456216"/>
        <dbReference type="EC" id="7.3.2.3"/>
    </reaction>
</comment>
<comment type="subunit">
    <text evidence="1">The complex is composed of two ATP-binding proteins (CysA), two transmembrane proteins (CysT and CysW) and a solute-binding protein (CysP).</text>
</comment>
<comment type="subcellular location">
    <subcellularLocation>
        <location evidence="1">Cell inner membrane</location>
        <topology evidence="1">Peripheral membrane protein</topology>
    </subcellularLocation>
</comment>
<comment type="similarity">
    <text evidence="1">Belongs to the ABC transporter superfamily. Sulfate/tungstate importer (TC 3.A.1.6) family.</text>
</comment>
<protein>
    <recommendedName>
        <fullName evidence="1">Sulfate/thiosulfate import ATP-binding protein CysA</fullName>
        <ecNumber evidence="1">7.3.2.3</ecNumber>
    </recommendedName>
    <alternativeName>
        <fullName evidence="1">Sulfate-transporting ATPase</fullName>
    </alternativeName>
</protein>
<name>CYSA_BRADU</name>
<evidence type="ECO:0000255" key="1">
    <source>
        <dbReference type="HAMAP-Rule" id="MF_01701"/>
    </source>
</evidence>
<dbReference type="EC" id="7.3.2.3" evidence="1"/>
<dbReference type="EMBL" id="BA000040">
    <property type="protein sequence ID" value="BAC46750.1"/>
    <property type="molecule type" value="Genomic_DNA"/>
</dbReference>
<dbReference type="RefSeq" id="NP_768125.1">
    <property type="nucleotide sequence ID" value="NC_004463.1"/>
</dbReference>
<dbReference type="RefSeq" id="WP_011084301.1">
    <property type="nucleotide sequence ID" value="NC_004463.1"/>
</dbReference>
<dbReference type="SMR" id="Q89UD2"/>
<dbReference type="FunCoup" id="Q89UD2">
    <property type="interactions" value="300"/>
</dbReference>
<dbReference type="STRING" id="224911.AAV28_04375"/>
<dbReference type="EnsemblBacteria" id="BAC46750">
    <property type="protein sequence ID" value="BAC46750"/>
    <property type="gene ID" value="BAC46750"/>
</dbReference>
<dbReference type="GeneID" id="46488761"/>
<dbReference type="KEGG" id="bja:blr1485"/>
<dbReference type="PATRIC" id="fig|224911.44.peg.919"/>
<dbReference type="eggNOG" id="COG1118">
    <property type="taxonomic scope" value="Bacteria"/>
</dbReference>
<dbReference type="HOGENOM" id="CLU_000604_1_1_5"/>
<dbReference type="InParanoid" id="Q89UD2"/>
<dbReference type="OrthoDB" id="9802264at2"/>
<dbReference type="PhylomeDB" id="Q89UD2"/>
<dbReference type="Proteomes" id="UP000002526">
    <property type="component" value="Chromosome"/>
</dbReference>
<dbReference type="GO" id="GO:0043190">
    <property type="term" value="C:ATP-binding cassette (ABC) transporter complex"/>
    <property type="evidence" value="ECO:0007669"/>
    <property type="project" value="InterPro"/>
</dbReference>
<dbReference type="GO" id="GO:0015419">
    <property type="term" value="F:ABC-type sulfate transporter activity"/>
    <property type="evidence" value="ECO:0007669"/>
    <property type="project" value="InterPro"/>
</dbReference>
<dbReference type="GO" id="GO:0102025">
    <property type="term" value="F:ABC-type thiosulfate transporter activity"/>
    <property type="evidence" value="ECO:0007669"/>
    <property type="project" value="RHEA"/>
</dbReference>
<dbReference type="GO" id="GO:0005524">
    <property type="term" value="F:ATP binding"/>
    <property type="evidence" value="ECO:0007669"/>
    <property type="project" value="UniProtKB-KW"/>
</dbReference>
<dbReference type="GO" id="GO:0016887">
    <property type="term" value="F:ATP hydrolysis activity"/>
    <property type="evidence" value="ECO:0007669"/>
    <property type="project" value="InterPro"/>
</dbReference>
<dbReference type="GO" id="GO:1902358">
    <property type="term" value="P:sulfate transmembrane transport"/>
    <property type="evidence" value="ECO:0000318"/>
    <property type="project" value="GO_Central"/>
</dbReference>
<dbReference type="CDD" id="cd03296">
    <property type="entry name" value="ABC_CysA_sulfate_importer"/>
    <property type="match status" value="1"/>
</dbReference>
<dbReference type="FunFam" id="3.40.50.300:FF:000227">
    <property type="entry name" value="Sulfate/thiosulfate import ATP-binding protein CysA"/>
    <property type="match status" value="1"/>
</dbReference>
<dbReference type="Gene3D" id="3.40.50.300">
    <property type="entry name" value="P-loop containing nucleotide triphosphate hydrolases"/>
    <property type="match status" value="1"/>
</dbReference>
<dbReference type="InterPro" id="IPR003593">
    <property type="entry name" value="AAA+_ATPase"/>
</dbReference>
<dbReference type="InterPro" id="IPR050093">
    <property type="entry name" value="ABC_SmlMolc_Importer"/>
</dbReference>
<dbReference type="InterPro" id="IPR003439">
    <property type="entry name" value="ABC_transporter-like_ATP-bd"/>
</dbReference>
<dbReference type="InterPro" id="IPR017871">
    <property type="entry name" value="ABC_transporter-like_CS"/>
</dbReference>
<dbReference type="InterPro" id="IPR008995">
    <property type="entry name" value="Mo/tungstate-bd_C_term_dom"/>
</dbReference>
<dbReference type="InterPro" id="IPR027417">
    <property type="entry name" value="P-loop_NTPase"/>
</dbReference>
<dbReference type="InterPro" id="IPR005666">
    <property type="entry name" value="Sulph_transpt1"/>
</dbReference>
<dbReference type="InterPro" id="IPR024765">
    <property type="entry name" value="TOBE-like"/>
</dbReference>
<dbReference type="NCBIfam" id="TIGR00968">
    <property type="entry name" value="3a0106s01"/>
    <property type="match status" value="1"/>
</dbReference>
<dbReference type="PANTHER" id="PTHR42781">
    <property type="entry name" value="SPERMIDINE/PUTRESCINE IMPORT ATP-BINDING PROTEIN POTA"/>
    <property type="match status" value="1"/>
</dbReference>
<dbReference type="PANTHER" id="PTHR42781:SF4">
    <property type="entry name" value="SPERMIDINE_PUTRESCINE IMPORT ATP-BINDING PROTEIN POTA"/>
    <property type="match status" value="1"/>
</dbReference>
<dbReference type="Pfam" id="PF00005">
    <property type="entry name" value="ABC_tran"/>
    <property type="match status" value="1"/>
</dbReference>
<dbReference type="Pfam" id="PF12857">
    <property type="entry name" value="TOBE_3"/>
    <property type="match status" value="1"/>
</dbReference>
<dbReference type="SMART" id="SM00382">
    <property type="entry name" value="AAA"/>
    <property type="match status" value="1"/>
</dbReference>
<dbReference type="SUPFAM" id="SSF50331">
    <property type="entry name" value="MOP-like"/>
    <property type="match status" value="1"/>
</dbReference>
<dbReference type="SUPFAM" id="SSF52540">
    <property type="entry name" value="P-loop containing nucleoside triphosphate hydrolases"/>
    <property type="match status" value="1"/>
</dbReference>
<dbReference type="PROSITE" id="PS00211">
    <property type="entry name" value="ABC_TRANSPORTER_1"/>
    <property type="match status" value="1"/>
</dbReference>
<dbReference type="PROSITE" id="PS50893">
    <property type="entry name" value="ABC_TRANSPORTER_2"/>
    <property type="match status" value="1"/>
</dbReference>
<dbReference type="PROSITE" id="PS51237">
    <property type="entry name" value="CYSA"/>
    <property type="match status" value="1"/>
</dbReference>
<proteinExistence type="inferred from homology"/>
<keyword id="KW-0067">ATP-binding</keyword>
<keyword id="KW-0997">Cell inner membrane</keyword>
<keyword id="KW-1003">Cell membrane</keyword>
<keyword id="KW-0472">Membrane</keyword>
<keyword id="KW-0547">Nucleotide-binding</keyword>
<keyword id="KW-1185">Reference proteome</keyword>
<keyword id="KW-0764">Sulfate transport</keyword>
<keyword id="KW-1278">Translocase</keyword>
<keyword id="KW-0813">Transport</keyword>